<comment type="function">
    <text evidence="1">Catalyzes the reduction of prostaglandin-ethanolamide H(2) (prostamide H(2)) to prostamide F(2alpha) with NADPH as proton donor. Also able to reduce prostaglandin H(2) to prostaglandin F(2alpha) (By similarity).</text>
</comment>
<comment type="catalytic activity">
    <reaction evidence="1">
        <text>prostaglandin H2 + [thioredoxin]-dithiol = prostaglandin F2alpha + [thioredoxin]-disulfide</text>
        <dbReference type="Rhea" id="RHEA:28214"/>
        <dbReference type="Rhea" id="RHEA-COMP:10698"/>
        <dbReference type="Rhea" id="RHEA-COMP:10700"/>
        <dbReference type="ChEBI" id="CHEBI:29950"/>
        <dbReference type="ChEBI" id="CHEBI:50058"/>
        <dbReference type="ChEBI" id="CHEBI:57404"/>
        <dbReference type="ChEBI" id="CHEBI:57405"/>
        <dbReference type="EC" id="1.11.1.20"/>
    </reaction>
</comment>
<comment type="catalytic activity">
    <reaction evidence="1">
        <text>prostamide F2alpha + [thioredoxin]-disulfide = prostamide H2 + [thioredoxin]-dithiol</text>
        <dbReference type="Rhea" id="RHEA:26373"/>
        <dbReference type="Rhea" id="RHEA-COMP:10698"/>
        <dbReference type="Rhea" id="RHEA-COMP:10700"/>
        <dbReference type="ChEBI" id="CHEBI:29950"/>
        <dbReference type="ChEBI" id="CHEBI:50058"/>
        <dbReference type="ChEBI" id="CHEBI:53081"/>
        <dbReference type="ChEBI" id="CHEBI:53082"/>
        <dbReference type="EC" id="1.11.1.20"/>
    </reaction>
</comment>
<comment type="subcellular location">
    <subcellularLocation>
        <location evidence="1">Cytoplasm</location>
        <location evidence="1">Cytosol</location>
    </subcellularLocation>
</comment>
<comment type="similarity">
    <text evidence="2">Belongs to the peroxiredoxin-like PRXL2 family. Prostamide/prostaglandin F synthase subfamily.</text>
</comment>
<sequence>MGNVDLAKLGAILVKNAITGETVEFQTLWKDNTSVIFFLRRFGCQICRWIAKDVSQLKESLDANQIRLIGIGPETVGLQEFLDGKYFTGELYLDESKQSYKELGFKRYNALSIVPAALGKKVRDIVTKANADGVQGNFSGDLLQSGGMLVVSKGGEKALLHFVQDSPGDFVPLDTLVTALGITADVTSSQRPECNDEVCTR</sequence>
<keyword id="KW-0963">Cytoplasm</keyword>
<keyword id="KW-0275">Fatty acid biosynthesis</keyword>
<keyword id="KW-0276">Fatty acid metabolism</keyword>
<keyword id="KW-0444">Lipid biosynthesis</keyword>
<keyword id="KW-0443">Lipid metabolism</keyword>
<keyword id="KW-0521">NADP</keyword>
<keyword id="KW-0560">Oxidoreductase</keyword>
<keyword id="KW-0643">Prostaglandin biosynthesis</keyword>
<keyword id="KW-0644">Prostaglandin metabolism</keyword>
<accession>C1C416</accession>
<gene>
    <name type="primary">prxl2b</name>
    <name type="synonym">fam213b</name>
</gene>
<dbReference type="EC" id="1.11.1.20" evidence="1"/>
<dbReference type="EMBL" id="BT081595">
    <property type="protein sequence ID" value="ACO51726.1"/>
    <property type="molecule type" value="mRNA"/>
</dbReference>
<dbReference type="SMR" id="C1C416"/>
<dbReference type="GO" id="GO:0005829">
    <property type="term" value="C:cytosol"/>
    <property type="evidence" value="ECO:0007669"/>
    <property type="project" value="UniProtKB-SubCell"/>
</dbReference>
<dbReference type="GO" id="GO:0016616">
    <property type="term" value="F:oxidoreductase activity, acting on the CH-OH group of donors, NAD or NADP as acceptor"/>
    <property type="evidence" value="ECO:0000250"/>
    <property type="project" value="UniProtKB"/>
</dbReference>
<dbReference type="GO" id="GO:0047017">
    <property type="term" value="F:prostaglandin F synthase activity"/>
    <property type="evidence" value="ECO:0007669"/>
    <property type="project" value="TreeGrafter"/>
</dbReference>
<dbReference type="GO" id="GO:0001516">
    <property type="term" value="P:prostaglandin biosynthetic process"/>
    <property type="evidence" value="ECO:0000250"/>
    <property type="project" value="UniProtKB"/>
</dbReference>
<dbReference type="CDD" id="cd02970">
    <property type="entry name" value="PRX_like2"/>
    <property type="match status" value="1"/>
</dbReference>
<dbReference type="FunFam" id="3.40.30.10:FF:000243">
    <property type="entry name" value="Prostamide/prostaglandin F synthase"/>
    <property type="match status" value="1"/>
</dbReference>
<dbReference type="Gene3D" id="3.40.30.10">
    <property type="entry name" value="Glutaredoxin"/>
    <property type="match status" value="1"/>
</dbReference>
<dbReference type="InterPro" id="IPR032801">
    <property type="entry name" value="PXL2A/B/C"/>
</dbReference>
<dbReference type="InterPro" id="IPR036249">
    <property type="entry name" value="Thioredoxin-like_sf"/>
</dbReference>
<dbReference type="PANTHER" id="PTHR28630">
    <property type="match status" value="1"/>
</dbReference>
<dbReference type="PANTHER" id="PTHR28630:SF29">
    <property type="entry name" value="PROSTAMIDE_PROSTAGLANDIN F SYNTHASE"/>
    <property type="match status" value="1"/>
</dbReference>
<dbReference type="Pfam" id="PF13911">
    <property type="entry name" value="AhpC-TSA_2"/>
    <property type="match status" value="1"/>
</dbReference>
<dbReference type="SUPFAM" id="SSF52833">
    <property type="entry name" value="Thioredoxin-like"/>
    <property type="match status" value="1"/>
</dbReference>
<evidence type="ECO:0000250" key="1">
    <source>
        <dbReference type="UniProtKB" id="Q9DB60"/>
    </source>
</evidence>
<evidence type="ECO:0000305" key="2"/>
<proteinExistence type="evidence at transcript level"/>
<name>PXL2B_AQUCT</name>
<protein>
    <recommendedName>
        <fullName>Prostamide/prostaglandin F synthase</fullName>
        <shortName>Prostamide/PG F synthase</shortName>
        <shortName>Prostamide/PGF synthase</shortName>
        <ecNumber evidence="1">1.11.1.20</ecNumber>
    </recommendedName>
    <alternativeName>
        <fullName>Peroxiredoxin-like 2B</fullName>
    </alternativeName>
</protein>
<reference key="1">
    <citation type="submission" date="2009-04" db="EMBL/GenBank/DDBJ databases">
        <title>Rana catesbeiana ESTs and full-length cDNAs.</title>
        <authorList>
            <person name="Helbing C.C."/>
            <person name="Veldhoen N."/>
            <person name="Leong J."/>
            <person name="Koop B.F."/>
        </authorList>
    </citation>
    <scope>NUCLEOTIDE SEQUENCE [LARGE SCALE MRNA]</scope>
</reference>
<organism>
    <name type="scientific">Aquarana catesbeiana</name>
    <name type="common">American bullfrog</name>
    <name type="synonym">Rana catesbeiana</name>
    <dbReference type="NCBI Taxonomy" id="8400"/>
    <lineage>
        <taxon>Eukaryota</taxon>
        <taxon>Metazoa</taxon>
        <taxon>Chordata</taxon>
        <taxon>Craniata</taxon>
        <taxon>Vertebrata</taxon>
        <taxon>Euteleostomi</taxon>
        <taxon>Amphibia</taxon>
        <taxon>Batrachia</taxon>
        <taxon>Anura</taxon>
        <taxon>Neobatrachia</taxon>
        <taxon>Ranoidea</taxon>
        <taxon>Ranidae</taxon>
        <taxon>Aquarana</taxon>
    </lineage>
</organism>
<feature type="chain" id="PRO_0000406972" description="Prostamide/prostaglandin F synthase">
    <location>
        <begin position="1"/>
        <end position="201"/>
    </location>
</feature>